<dbReference type="EMBL" id="AY603381">
    <property type="protein sequence ID" value="AAT99435.1"/>
    <property type="molecule type" value="mRNA"/>
</dbReference>
<dbReference type="EMBL" id="AP004758">
    <property type="protein sequence ID" value="BAD35901.1"/>
    <property type="molecule type" value="Genomic_DNA"/>
</dbReference>
<dbReference type="EMBL" id="AP008212">
    <property type="protein sequence ID" value="BAF19019.1"/>
    <property type="status" value="ALT_SEQ"/>
    <property type="molecule type" value="Genomic_DNA"/>
</dbReference>
<dbReference type="EMBL" id="AP014962">
    <property type="protein sequence ID" value="BAS96723.1"/>
    <property type="molecule type" value="Genomic_DNA"/>
</dbReference>
<dbReference type="SMR" id="Q69T51"/>
<dbReference type="FunCoup" id="Q69T51">
    <property type="interactions" value="232"/>
</dbReference>
<dbReference type="STRING" id="39947.Q69T51"/>
<dbReference type="GlyCosmos" id="Q69T51">
    <property type="glycosylation" value="5 sites, No reported glycans"/>
</dbReference>
<dbReference type="PaxDb" id="39947-Q69T51"/>
<dbReference type="EnsemblPlants" id="Os06t0208800-01">
    <property type="protein sequence ID" value="Os06t0208800-01"/>
    <property type="gene ID" value="Os06g0208800"/>
</dbReference>
<dbReference type="Gramene" id="Os06t0208800-01">
    <property type="protein sequence ID" value="Os06t0208800-01"/>
    <property type="gene ID" value="Os06g0208800"/>
</dbReference>
<dbReference type="KEGG" id="dosa:Os06g0208800"/>
<dbReference type="KEGG" id="osa:4340448"/>
<dbReference type="eggNOG" id="ENOG502QWAT">
    <property type="taxonomic scope" value="Eukaryota"/>
</dbReference>
<dbReference type="InParanoid" id="Q69T51"/>
<dbReference type="OrthoDB" id="2107166at2759"/>
<dbReference type="PlantReactome" id="R-OSA-9611432">
    <property type="pathway name" value="Recognition of fungal and bacterial pathogens and immunity response"/>
</dbReference>
<dbReference type="Proteomes" id="UP000000763">
    <property type="component" value="Chromosome 6"/>
</dbReference>
<dbReference type="Proteomes" id="UP000059680">
    <property type="component" value="Chromosome 6"/>
</dbReference>
<dbReference type="GO" id="GO:0005886">
    <property type="term" value="C:plasma membrane"/>
    <property type="evidence" value="ECO:0007669"/>
    <property type="project" value="UniProtKB-SubCell"/>
</dbReference>
<dbReference type="GO" id="GO:0098552">
    <property type="term" value="C:side of membrane"/>
    <property type="evidence" value="ECO:0007669"/>
    <property type="project" value="UniProtKB-KW"/>
</dbReference>
<dbReference type="GO" id="GO:0045087">
    <property type="term" value="P:innate immune response"/>
    <property type="evidence" value="ECO:0007669"/>
    <property type="project" value="UniProtKB-KW"/>
</dbReference>
<dbReference type="CDD" id="cd00118">
    <property type="entry name" value="LysM"/>
    <property type="match status" value="1"/>
</dbReference>
<dbReference type="Gene3D" id="3.10.350.10">
    <property type="entry name" value="LysM domain"/>
    <property type="match status" value="1"/>
</dbReference>
<dbReference type="InterPro" id="IPR036393">
    <property type="entry name" value="AceGlu_kinase-like_sf"/>
</dbReference>
<dbReference type="InterPro" id="IPR018392">
    <property type="entry name" value="LysM_dom"/>
</dbReference>
<dbReference type="InterPro" id="IPR036779">
    <property type="entry name" value="LysM_dom_sf"/>
</dbReference>
<dbReference type="PANTHER" id="PTHR33734:SF35">
    <property type="entry name" value="LYSM DOMAIN-CONTAINING GPI-ANCHORED PROTEIN 1"/>
    <property type="match status" value="1"/>
</dbReference>
<dbReference type="PANTHER" id="PTHR33734">
    <property type="entry name" value="LYSM DOMAIN-CONTAINING GPI-ANCHORED PROTEIN 2"/>
    <property type="match status" value="1"/>
</dbReference>
<dbReference type="Pfam" id="PF01476">
    <property type="entry name" value="LysM"/>
    <property type="match status" value="1"/>
</dbReference>
<dbReference type="SMART" id="SM00257">
    <property type="entry name" value="LysM"/>
    <property type="match status" value="1"/>
</dbReference>
<dbReference type="SUPFAM" id="SSF53633">
    <property type="entry name" value="Carbamate kinase-like"/>
    <property type="match status" value="1"/>
</dbReference>
<dbReference type="SUPFAM" id="SSF54106">
    <property type="entry name" value="LysM domain"/>
    <property type="match status" value="1"/>
</dbReference>
<dbReference type="PROSITE" id="PS51782">
    <property type="entry name" value="LYSM"/>
    <property type="match status" value="2"/>
</dbReference>
<evidence type="ECO:0000250" key="1">
    <source>
        <dbReference type="UniProtKB" id="Q8H8C7"/>
    </source>
</evidence>
<evidence type="ECO:0000255" key="2"/>
<evidence type="ECO:0000255" key="3">
    <source>
        <dbReference type="PROSITE-ProRule" id="PRU00498"/>
    </source>
</evidence>
<evidence type="ECO:0000255" key="4">
    <source>
        <dbReference type="PROSITE-ProRule" id="PRU01118"/>
    </source>
</evidence>
<evidence type="ECO:0000256" key="5">
    <source>
        <dbReference type="SAM" id="MobiDB-lite"/>
    </source>
</evidence>
<evidence type="ECO:0000269" key="6">
    <source>
    </source>
</evidence>
<evidence type="ECO:0000269" key="7">
    <source>
    </source>
</evidence>
<evidence type="ECO:0000269" key="8">
    <source>
    </source>
</evidence>
<evidence type="ECO:0000269" key="9">
    <source>
    </source>
</evidence>
<evidence type="ECO:0000303" key="10">
    <source>
    </source>
</evidence>
<evidence type="ECO:0000305" key="11"/>
<evidence type="ECO:0000312" key="12">
    <source>
        <dbReference type="EMBL" id="BAD35901.1"/>
    </source>
</evidence>
<evidence type="ECO:0000312" key="13">
    <source>
        <dbReference type="PROSITE" id="PS51782"/>
    </source>
</evidence>
<keyword id="KW-1003">Cell membrane</keyword>
<keyword id="KW-1015">Disulfide bond</keyword>
<keyword id="KW-0325">Glycoprotein</keyword>
<keyword id="KW-0336">GPI-anchor</keyword>
<keyword id="KW-0391">Immunity</keyword>
<keyword id="KW-0399">Innate immunity</keyword>
<keyword id="KW-0449">Lipoprotein</keyword>
<keyword id="KW-0472">Membrane</keyword>
<keyword id="KW-0611">Plant defense</keyword>
<keyword id="KW-0675">Receptor</keyword>
<keyword id="KW-1185">Reference proteome</keyword>
<keyword id="KW-0677">Repeat</keyword>
<keyword id="KW-0732">Signal</keyword>
<name>LYP6_ORYSJ</name>
<organism>
    <name type="scientific">Oryza sativa subsp. japonica</name>
    <name type="common">Rice</name>
    <dbReference type="NCBI Taxonomy" id="39947"/>
    <lineage>
        <taxon>Eukaryota</taxon>
        <taxon>Viridiplantae</taxon>
        <taxon>Streptophyta</taxon>
        <taxon>Embryophyta</taxon>
        <taxon>Tracheophyta</taxon>
        <taxon>Spermatophyta</taxon>
        <taxon>Magnoliopsida</taxon>
        <taxon>Liliopsida</taxon>
        <taxon>Poales</taxon>
        <taxon>Poaceae</taxon>
        <taxon>BOP clade</taxon>
        <taxon>Oryzoideae</taxon>
        <taxon>Oryzeae</taxon>
        <taxon>Oryzinae</taxon>
        <taxon>Oryza</taxon>
        <taxon>Oryza sativa</taxon>
    </lineage>
</organism>
<accession>Q69T51</accession>
<accession>Q0DDQ4</accession>
<accession>Q4VVD8</accession>
<gene>
    <name evidence="10" type="primary">LYP6</name>
    <name evidence="13" type="ordered locus">Os06g0208800</name>
    <name evidence="11" type="ordered locus">LOC_Os06g10660</name>
    <name evidence="12" type="ORF">P0664C05.26</name>
</gene>
<reference key="1">
    <citation type="submission" date="2004-04" db="EMBL/GenBank/DDBJ databases">
        <title>GPI-anchored protein.</title>
        <authorList>
            <person name="Zhong J."/>
            <person name="Liu B."/>
            <person name="Wang H."/>
            <person name="Wang J."/>
        </authorList>
    </citation>
    <scope>NUCLEOTIDE SEQUENCE [MRNA]</scope>
</reference>
<reference key="2">
    <citation type="journal article" date="2005" name="Nature">
        <title>The map-based sequence of the rice genome.</title>
        <authorList>
            <consortium name="International rice genome sequencing project (IRGSP)"/>
        </authorList>
    </citation>
    <scope>NUCLEOTIDE SEQUENCE [LARGE SCALE GENOMIC DNA]</scope>
    <source>
        <strain>cv. Nipponbare</strain>
    </source>
</reference>
<reference key="3">
    <citation type="journal article" date="2008" name="Nucleic Acids Res.">
        <title>The rice annotation project database (RAP-DB): 2008 update.</title>
        <authorList>
            <consortium name="The rice annotation project (RAP)"/>
        </authorList>
    </citation>
    <scope>GENOME REANNOTATION</scope>
    <source>
        <strain>cv. Nipponbare</strain>
    </source>
</reference>
<reference key="4">
    <citation type="journal article" date="2013" name="Rice">
        <title>Improvement of the Oryza sativa Nipponbare reference genome using next generation sequence and optical map data.</title>
        <authorList>
            <person name="Kawahara Y."/>
            <person name="de la Bastide M."/>
            <person name="Hamilton J.P."/>
            <person name="Kanamori H."/>
            <person name="McCombie W.R."/>
            <person name="Ouyang S."/>
            <person name="Schwartz D.C."/>
            <person name="Tanaka T."/>
            <person name="Wu J."/>
            <person name="Zhou S."/>
            <person name="Childs K.L."/>
            <person name="Davidson R.M."/>
            <person name="Lin H."/>
            <person name="Quesada-Ocampo L."/>
            <person name="Vaillancourt B."/>
            <person name="Sakai H."/>
            <person name="Lee S.S."/>
            <person name="Kim J."/>
            <person name="Numa H."/>
            <person name="Itoh T."/>
            <person name="Buell C.R."/>
            <person name="Matsumoto T."/>
        </authorList>
    </citation>
    <scope>GENOME REANNOTATION</scope>
    <source>
        <strain>cv. Nipponbare</strain>
    </source>
</reference>
<reference key="5">
    <citation type="journal article" date="2012" name="Plant Cell">
        <title>Lysin motif-containing proteins LYP4 and LYP6 play dual roles in peptidoglycan and chitin perception in rice innate immunity.</title>
        <authorList>
            <person name="Liu B."/>
            <person name="Li J.F."/>
            <person name="Ao Y."/>
            <person name="Qu J."/>
            <person name="Li Z."/>
            <person name="Su J."/>
            <person name="Zhang Y."/>
            <person name="Liu J."/>
            <person name="Feng D."/>
            <person name="Qi K."/>
            <person name="He Y."/>
            <person name="Wang J."/>
            <person name="Wang H.B."/>
        </authorList>
    </citation>
    <scope>FUNCTION</scope>
    <scope>SUBCELLULAR LOCATION</scope>
    <scope>TISSUE SPECIFICITY</scope>
    <scope>INDUCTION</scope>
</reference>
<reference key="6">
    <citation type="journal article" date="2013" name="Plant Signal. Behav.">
        <title>OsLYP4 and OsLYP6 play critical roles in rice defense signal transduction.</title>
        <authorList>
            <person name="Liu B."/>
            <person name="Li J.F."/>
            <person name="Ao Y."/>
            <person name="Li Z."/>
            <person name="Liu J."/>
            <person name="Feng D."/>
            <person name="Qi K."/>
            <person name="He Y."/>
            <person name="Zeng L."/>
            <person name="Wang J."/>
            <person name="Wang H.B."/>
        </authorList>
    </citation>
    <scope>FUNCTION</scope>
    <scope>INTERACTION WITH LYP4</scope>
</reference>
<reference key="7">
    <citation type="journal article" date="2014" name="Mol. Plant Microbe Interact.">
        <title>Targeted gene disruption of OsCERK1 reveals its indispensable role in chitin perception and involvement in the peptidoglycan response and immunity in rice.</title>
        <authorList>
            <person name="Kouzai Y."/>
            <person name="Mochizuki S."/>
            <person name="Nakajima K."/>
            <person name="Desaki Y."/>
            <person name="Hayafune M."/>
            <person name="Miyazaki H."/>
            <person name="Yokotani N."/>
            <person name="Ozawa K."/>
            <person name="Minami E."/>
            <person name="Kaku H."/>
            <person name="Shibuya N."/>
            <person name="Nishizawa Y."/>
        </authorList>
    </citation>
    <scope>INTERACTION WITH CERK1 AND CEBIP</scope>
</reference>
<reference key="8">
    <citation type="journal article" date="2014" name="Plant J.">
        <title>OsCERK1 and OsRLCK176 play important roles in peptidoglycan and chitin signaling in rice innate immunity.</title>
        <authorList>
            <person name="Ao Y."/>
            <person name="Li Z."/>
            <person name="Feng D."/>
            <person name="Xiong F."/>
            <person name="Liu J."/>
            <person name="Li J.F."/>
            <person name="Wang M."/>
            <person name="Wang J."/>
            <person name="Liu B."/>
            <person name="Wang H.B."/>
        </authorList>
    </citation>
    <scope>INTERACTION WITH CERK1</scope>
    <scope>SUBCELLULAR LOCATION</scope>
</reference>
<sequence>MAGWPAAEAAGALVVAILAAAAGGAAGKTTIEPCAGADTCAALLGYTLYADMKVSEVAALFGADPRAVLAANALDFASPGAANRILPAGLPLRVPTRCACSDGVRKSVAVRYSARPADTLASVADVVFAGLASADQIRTANGLSAEDPDAPLDAGATLVVPLPCACFNSTDNNLPAVYLSYVVRVGDTVQSIAATHATTVTDISNVNAMGSPIVAPGDILAIPLPACASMFPNSASDYGLLVANGTYALTAGNCVQCSCGPGDLKLYCTPASLTASCSSMQCPNSNLMLGNVTAQSTSGGCNVSSCSYAGLVNGTIATSLSSGLQPTCPGPHQFPPLRATPIAVNQGSYLAPSPAPGAGEAGGDIPGFPGSSNVSPANGPSGSVSQAASVNRPHQIVALILSVALYFQM</sequence>
<proteinExistence type="evidence at protein level"/>
<protein>
    <recommendedName>
        <fullName evidence="11">LysM domain-containing GPI-anchored protein LYP6</fullName>
    </recommendedName>
    <alternativeName>
        <fullName evidence="10">LysM domain-containing protein 6</fullName>
        <shortName evidence="10">Os-LYP6</shortName>
    </alternativeName>
</protein>
<feature type="signal peptide" evidence="2">
    <location>
        <begin position="1"/>
        <end position="27"/>
    </location>
</feature>
<feature type="chain" id="PRO_5010141498" description="LysM domain-containing GPI-anchored protein LYP6" evidence="2">
    <location>
        <begin position="28"/>
        <end position="387"/>
    </location>
</feature>
<feature type="propeptide" id="PRO_0000440897" description="Removed in mature form" evidence="2">
    <location>
        <begin position="388"/>
        <end position="409"/>
    </location>
</feature>
<feature type="domain" description="LysM 1" evidence="4">
    <location>
        <begin position="110"/>
        <end position="160"/>
    </location>
</feature>
<feature type="domain" description="LysM 2" evidence="4">
    <location>
        <begin position="179"/>
        <end position="222"/>
    </location>
</feature>
<feature type="region of interest" description="Disordered" evidence="5">
    <location>
        <begin position="353"/>
        <end position="387"/>
    </location>
</feature>
<feature type="compositionally biased region" description="Polar residues" evidence="5">
    <location>
        <begin position="370"/>
        <end position="387"/>
    </location>
</feature>
<feature type="lipid moiety-binding region" description="GPI-anchor amidated alanine" evidence="2">
    <location>
        <position position="387"/>
    </location>
</feature>
<feature type="glycosylation site" description="N-linked (GlcNAc...) asparagine" evidence="3">
    <location>
        <position position="168"/>
    </location>
</feature>
<feature type="glycosylation site" description="N-linked (GlcNAc...) asparagine" evidence="3">
    <location>
        <position position="244"/>
    </location>
</feature>
<feature type="glycosylation site" description="N-linked (GlcNAc...) asparagine" evidence="3">
    <location>
        <position position="291"/>
    </location>
</feature>
<feature type="glycosylation site" description="N-linked (GlcNAc...) asparagine" evidence="3">
    <location>
        <position position="302"/>
    </location>
</feature>
<feature type="glycosylation site" description="N-linked (GlcNAc...) asparagine" evidence="3">
    <location>
        <position position="313"/>
    </location>
</feature>
<feature type="disulfide bond" evidence="1">
    <location>
        <begin position="34"/>
        <end position="100"/>
    </location>
</feature>
<feature type="disulfide bond" evidence="1">
    <location>
        <begin position="40"/>
        <end position="166"/>
    </location>
</feature>
<feature type="disulfide bond" evidence="1">
    <location>
        <begin position="98"/>
        <end position="164"/>
    </location>
</feature>
<feature type="disulfide bond" evidence="1">
    <location>
        <begin position="100"/>
        <end position="166"/>
    </location>
</feature>
<feature type="disulfide bond" evidence="1">
    <location>
        <begin position="227"/>
        <end position="259"/>
    </location>
</feature>
<feature type="disulfide bond" evidence="1">
    <location>
        <begin position="254"/>
        <end position="282"/>
    </location>
</feature>
<feature type="sequence conflict" description="In Ref. 1; AAT99435." evidence="11" ref="1">
    <original>C</original>
    <variation>S</variation>
    <location>
        <position position="257"/>
    </location>
</feature>
<comment type="function">
    <text evidence="6 7">Functions in innate immunity. Functions as a pattern recognition receptor (PRR), sensing bacterial peptidoglycan (PGN) and fungal chitin at the cell surface. Involved in resistance against the bacterial pathogen Xanthomonas oryzae pv. oryzae (Xoo) and the fungal pathogen Magnaporthe oryzae. Binds PGN and fungal chitin in vitro (PubMed:22872757). Involved in microbe-associated molecular patterns (MAMPs) perception and participates in the activation of defense genes against the bacterial pathogen Xanthomonas oryzae pv. oryzicola (Xoc) or the fungal pathogen Magnaporthe oryzae (PubMed:23299421).</text>
</comment>
<comment type="subunit">
    <text evidence="7 8 9">Interacts with LYP4 (PubMed:23299421). Interacts with CERK1 (PubMed:24964058, PubMed:25335639). Interacts with CEBIP (PubMed:24964058).</text>
</comment>
<comment type="subcellular location">
    <subcellularLocation>
        <location evidence="6 9">Cell membrane</location>
        <topology evidence="2">Lipid-anchor</topology>
        <topology evidence="2">GPI-anchor</topology>
    </subcellularLocation>
</comment>
<comment type="tissue specificity">
    <text evidence="6">Expressed in roots and leaves.</text>
</comment>
<comment type="induction">
    <text evidence="6">Induced by bacterial peptidoglycan, cell wall muropeptides, chitin, N-acetylchitohexaose, lipopolysaccharide, and flg22 flagellin. Induced by infection with the bacterial pathogen Xanthomonas oryzae pv. oryzae.</text>
</comment>
<comment type="miscellaneous">
    <text evidence="6">Plants silencing LYP6 exhibit significant compromised defense responses and enhanced susceptibility toward the bacterial pathogen Xanthomonas oryzae and the fungal pathogen Magnaporthe oryzae.</text>
</comment>
<comment type="sequence caution" evidence="11">
    <conflict type="erroneous gene model prediction">
        <sequence resource="EMBL-CDS" id="BAF19019"/>
    </conflict>
</comment>